<accession>Q7UZP0</accession>
<dbReference type="EC" id="6.1.1.6" evidence="1"/>
<dbReference type="EMBL" id="BX548174">
    <property type="protein sequence ID" value="CAE20077.1"/>
    <property type="molecule type" value="Genomic_DNA"/>
</dbReference>
<dbReference type="RefSeq" id="WP_011133245.1">
    <property type="nucleotide sequence ID" value="NC_005072.1"/>
</dbReference>
<dbReference type="SMR" id="Q7UZP0"/>
<dbReference type="STRING" id="59919.PMM1618"/>
<dbReference type="KEGG" id="pmm:PMM1618"/>
<dbReference type="eggNOG" id="COG1190">
    <property type="taxonomic scope" value="Bacteria"/>
</dbReference>
<dbReference type="HOGENOM" id="CLU_008255_6_0_3"/>
<dbReference type="OrthoDB" id="9802326at2"/>
<dbReference type="Proteomes" id="UP000001026">
    <property type="component" value="Chromosome"/>
</dbReference>
<dbReference type="GO" id="GO:0005829">
    <property type="term" value="C:cytosol"/>
    <property type="evidence" value="ECO:0007669"/>
    <property type="project" value="TreeGrafter"/>
</dbReference>
<dbReference type="GO" id="GO:0005524">
    <property type="term" value="F:ATP binding"/>
    <property type="evidence" value="ECO:0007669"/>
    <property type="project" value="UniProtKB-UniRule"/>
</dbReference>
<dbReference type="GO" id="GO:0004824">
    <property type="term" value="F:lysine-tRNA ligase activity"/>
    <property type="evidence" value="ECO:0007669"/>
    <property type="project" value="UniProtKB-UniRule"/>
</dbReference>
<dbReference type="GO" id="GO:0000287">
    <property type="term" value="F:magnesium ion binding"/>
    <property type="evidence" value="ECO:0007669"/>
    <property type="project" value="UniProtKB-UniRule"/>
</dbReference>
<dbReference type="GO" id="GO:0000049">
    <property type="term" value="F:tRNA binding"/>
    <property type="evidence" value="ECO:0007669"/>
    <property type="project" value="TreeGrafter"/>
</dbReference>
<dbReference type="GO" id="GO:0006430">
    <property type="term" value="P:lysyl-tRNA aminoacylation"/>
    <property type="evidence" value="ECO:0007669"/>
    <property type="project" value="UniProtKB-UniRule"/>
</dbReference>
<dbReference type="CDD" id="cd00775">
    <property type="entry name" value="LysRS_core"/>
    <property type="match status" value="1"/>
</dbReference>
<dbReference type="CDD" id="cd04322">
    <property type="entry name" value="LysRS_N"/>
    <property type="match status" value="1"/>
</dbReference>
<dbReference type="FunFam" id="2.40.50.140:FF:000024">
    <property type="entry name" value="Lysine--tRNA ligase"/>
    <property type="match status" value="1"/>
</dbReference>
<dbReference type="Gene3D" id="3.30.930.10">
    <property type="entry name" value="Bira Bifunctional Protein, Domain 2"/>
    <property type="match status" value="1"/>
</dbReference>
<dbReference type="Gene3D" id="2.40.50.140">
    <property type="entry name" value="Nucleic acid-binding proteins"/>
    <property type="match status" value="1"/>
</dbReference>
<dbReference type="HAMAP" id="MF_00252">
    <property type="entry name" value="Lys_tRNA_synth_class2"/>
    <property type="match status" value="1"/>
</dbReference>
<dbReference type="InterPro" id="IPR004364">
    <property type="entry name" value="Aa-tRNA-synt_II"/>
</dbReference>
<dbReference type="InterPro" id="IPR006195">
    <property type="entry name" value="aa-tRNA-synth_II"/>
</dbReference>
<dbReference type="InterPro" id="IPR045864">
    <property type="entry name" value="aa-tRNA-synth_II/BPL/LPL"/>
</dbReference>
<dbReference type="InterPro" id="IPR002313">
    <property type="entry name" value="Lys-tRNA-ligase_II"/>
</dbReference>
<dbReference type="InterPro" id="IPR034762">
    <property type="entry name" value="Lys-tRNA-ligase_II_bac/euk"/>
</dbReference>
<dbReference type="InterPro" id="IPR044136">
    <property type="entry name" value="Lys-tRNA-ligase_II_N"/>
</dbReference>
<dbReference type="InterPro" id="IPR018149">
    <property type="entry name" value="Lys-tRNA-synth_II_C"/>
</dbReference>
<dbReference type="InterPro" id="IPR012340">
    <property type="entry name" value="NA-bd_OB-fold"/>
</dbReference>
<dbReference type="InterPro" id="IPR004365">
    <property type="entry name" value="NA-bd_OB_tRNA"/>
</dbReference>
<dbReference type="NCBIfam" id="TIGR00499">
    <property type="entry name" value="lysS_bact"/>
    <property type="match status" value="1"/>
</dbReference>
<dbReference type="NCBIfam" id="NF001756">
    <property type="entry name" value="PRK00484.1"/>
    <property type="match status" value="1"/>
</dbReference>
<dbReference type="PANTHER" id="PTHR42918:SF15">
    <property type="entry name" value="LYSINE--TRNA LIGASE, CHLOROPLASTIC_MITOCHONDRIAL"/>
    <property type="match status" value="1"/>
</dbReference>
<dbReference type="PANTHER" id="PTHR42918">
    <property type="entry name" value="LYSYL-TRNA SYNTHETASE"/>
    <property type="match status" value="1"/>
</dbReference>
<dbReference type="Pfam" id="PF00152">
    <property type="entry name" value="tRNA-synt_2"/>
    <property type="match status" value="1"/>
</dbReference>
<dbReference type="Pfam" id="PF01336">
    <property type="entry name" value="tRNA_anti-codon"/>
    <property type="match status" value="1"/>
</dbReference>
<dbReference type="PIRSF" id="PIRSF039101">
    <property type="entry name" value="LysRS2"/>
    <property type="match status" value="1"/>
</dbReference>
<dbReference type="PRINTS" id="PR00982">
    <property type="entry name" value="TRNASYNTHLYS"/>
</dbReference>
<dbReference type="SUPFAM" id="SSF55681">
    <property type="entry name" value="Class II aaRS and biotin synthetases"/>
    <property type="match status" value="1"/>
</dbReference>
<dbReference type="SUPFAM" id="SSF50249">
    <property type="entry name" value="Nucleic acid-binding proteins"/>
    <property type="match status" value="1"/>
</dbReference>
<dbReference type="PROSITE" id="PS50862">
    <property type="entry name" value="AA_TRNA_LIGASE_II"/>
    <property type="match status" value="1"/>
</dbReference>
<organism>
    <name type="scientific">Prochlorococcus marinus subsp. pastoris (strain CCMP1986 / NIES-2087 / MED4)</name>
    <dbReference type="NCBI Taxonomy" id="59919"/>
    <lineage>
        <taxon>Bacteria</taxon>
        <taxon>Bacillati</taxon>
        <taxon>Cyanobacteriota</taxon>
        <taxon>Cyanophyceae</taxon>
        <taxon>Synechococcales</taxon>
        <taxon>Prochlorococcaceae</taxon>
        <taxon>Prochlorococcus</taxon>
    </lineage>
</organism>
<keyword id="KW-0030">Aminoacyl-tRNA synthetase</keyword>
<keyword id="KW-0067">ATP-binding</keyword>
<keyword id="KW-0963">Cytoplasm</keyword>
<keyword id="KW-0436">Ligase</keyword>
<keyword id="KW-0460">Magnesium</keyword>
<keyword id="KW-0479">Metal-binding</keyword>
<keyword id="KW-0547">Nucleotide-binding</keyword>
<keyword id="KW-0648">Protein biosynthesis</keyword>
<protein>
    <recommendedName>
        <fullName evidence="1">Lysine--tRNA ligase</fullName>
        <ecNumber evidence="1">6.1.1.6</ecNumber>
    </recommendedName>
    <alternativeName>
        <fullName evidence="1">Lysyl-tRNA synthetase</fullName>
        <shortName evidence="1">LysRS</shortName>
    </alternativeName>
</protein>
<gene>
    <name evidence="1" type="primary">lysS</name>
    <name type="ordered locus">PMM1618</name>
</gene>
<proteinExistence type="inferred from homology"/>
<feature type="chain" id="PRO_0000152667" description="Lysine--tRNA ligase">
    <location>
        <begin position="1"/>
        <end position="512"/>
    </location>
</feature>
<feature type="binding site" evidence="1">
    <location>
        <position position="408"/>
    </location>
    <ligand>
        <name>Mg(2+)</name>
        <dbReference type="ChEBI" id="CHEBI:18420"/>
        <label>1</label>
    </ligand>
</feature>
<feature type="binding site" evidence="1">
    <location>
        <position position="415"/>
    </location>
    <ligand>
        <name>Mg(2+)</name>
        <dbReference type="ChEBI" id="CHEBI:18420"/>
        <label>1</label>
    </ligand>
</feature>
<feature type="binding site" evidence="1">
    <location>
        <position position="415"/>
    </location>
    <ligand>
        <name>Mg(2+)</name>
        <dbReference type="ChEBI" id="CHEBI:18420"/>
        <label>2</label>
    </ligand>
</feature>
<comment type="catalytic activity">
    <reaction evidence="1">
        <text>tRNA(Lys) + L-lysine + ATP = L-lysyl-tRNA(Lys) + AMP + diphosphate</text>
        <dbReference type="Rhea" id="RHEA:20792"/>
        <dbReference type="Rhea" id="RHEA-COMP:9696"/>
        <dbReference type="Rhea" id="RHEA-COMP:9697"/>
        <dbReference type="ChEBI" id="CHEBI:30616"/>
        <dbReference type="ChEBI" id="CHEBI:32551"/>
        <dbReference type="ChEBI" id="CHEBI:33019"/>
        <dbReference type="ChEBI" id="CHEBI:78442"/>
        <dbReference type="ChEBI" id="CHEBI:78529"/>
        <dbReference type="ChEBI" id="CHEBI:456215"/>
        <dbReference type="EC" id="6.1.1.6"/>
    </reaction>
</comment>
<comment type="cofactor">
    <cofactor evidence="1">
        <name>Mg(2+)</name>
        <dbReference type="ChEBI" id="CHEBI:18420"/>
    </cofactor>
    <text evidence="1">Binds 3 Mg(2+) ions per subunit.</text>
</comment>
<comment type="subunit">
    <text evidence="1">Homodimer.</text>
</comment>
<comment type="subcellular location">
    <subcellularLocation>
        <location evidence="1">Cytoplasm</location>
    </subcellularLocation>
</comment>
<comment type="similarity">
    <text evidence="1">Belongs to the class-II aminoacyl-tRNA synthetase family.</text>
</comment>
<reference key="1">
    <citation type="journal article" date="2003" name="Nature">
        <title>Genome divergence in two Prochlorococcus ecotypes reflects oceanic niche differentiation.</title>
        <authorList>
            <person name="Rocap G."/>
            <person name="Larimer F.W."/>
            <person name="Lamerdin J.E."/>
            <person name="Malfatti S."/>
            <person name="Chain P."/>
            <person name="Ahlgren N.A."/>
            <person name="Arellano A."/>
            <person name="Coleman M."/>
            <person name="Hauser L."/>
            <person name="Hess W.R."/>
            <person name="Johnson Z.I."/>
            <person name="Land M.L."/>
            <person name="Lindell D."/>
            <person name="Post A.F."/>
            <person name="Regala W."/>
            <person name="Shah M."/>
            <person name="Shaw S.L."/>
            <person name="Steglich C."/>
            <person name="Sullivan M.B."/>
            <person name="Ting C.S."/>
            <person name="Tolonen A."/>
            <person name="Webb E.A."/>
            <person name="Zinser E.R."/>
            <person name="Chisholm S.W."/>
        </authorList>
    </citation>
    <scope>NUCLEOTIDE SEQUENCE [LARGE SCALE GENOMIC DNA]</scope>
    <source>
        <strain>CCMP1986 / NIES-2087 / MED4</strain>
    </source>
</reference>
<name>SYK_PROMP</name>
<evidence type="ECO:0000255" key="1">
    <source>
        <dbReference type="HAMAP-Rule" id="MF_00252"/>
    </source>
</evidence>
<sequence>MSEIREARLLKANSLVKKGFEPYAETFKITHSTKFLTEKFGYLENGQDFNLDVAIAGRVLAKRVMGKIAFYTIADQEGKIQLYLEKKILDDFEIHAKLLSFEDLKEIVDIGDWIGVYGTIKKTNKGELSIKVSKWEMLSKSLQPLPDKWHGLTDIEKRYRQRYLDLIVNPLSKNVFKTRAKCISLIRRWLDEKNFLEIETPILQSEAGGAEARPFITHHNTLDIPLYLRIATELHLKRMVVGGFEKVYELGRIFRNEGISTKHNPEFTSVEIYQAFSNYIDMMNLTEDLIRDIVLSCCDSLIINYQEKVIDFSKPWKRISMKDVVMEYTGIDFDSFNGDLNKAMKDLEESNIEISPKINTLGRLLNEVFEEKVESQLVEPTFVIDYPIEISPLARPHPENKEMVQRFELFIAGRELANAFSELIDPVDQRKRMQLQQSLRDAGDLEAHCIDEDFLQALEIGMPPTGGLGIGIDRLIMLLTNSPSIRDVITFPLLKPEITSTKSEKSTSNEVK</sequence>